<reference key="1">
    <citation type="submission" date="2008-04" db="EMBL/GenBank/DDBJ databases">
        <title>Complete sequence of Yersinia pseudotuberculosis PB1/+.</title>
        <authorList>
            <person name="Copeland A."/>
            <person name="Lucas S."/>
            <person name="Lapidus A."/>
            <person name="Glavina del Rio T."/>
            <person name="Dalin E."/>
            <person name="Tice H."/>
            <person name="Bruce D."/>
            <person name="Goodwin L."/>
            <person name="Pitluck S."/>
            <person name="Munk A.C."/>
            <person name="Brettin T."/>
            <person name="Detter J.C."/>
            <person name="Han C."/>
            <person name="Tapia R."/>
            <person name="Schmutz J."/>
            <person name="Larimer F."/>
            <person name="Land M."/>
            <person name="Hauser L."/>
            <person name="Challacombe J.F."/>
            <person name="Green L."/>
            <person name="Lindler L.E."/>
            <person name="Nikolich M.P."/>
            <person name="Richardson P."/>
        </authorList>
    </citation>
    <scope>NUCLEOTIDE SEQUENCE [LARGE SCALE GENOMIC DNA]</scope>
    <source>
        <strain>PB1/+</strain>
    </source>
</reference>
<gene>
    <name evidence="1" type="primary">rlmM</name>
    <name type="ordered locus">YPTS_3136</name>
</gene>
<accession>B2JZ47</accession>
<organism>
    <name type="scientific">Yersinia pseudotuberculosis serotype IB (strain PB1/+)</name>
    <dbReference type="NCBI Taxonomy" id="502801"/>
    <lineage>
        <taxon>Bacteria</taxon>
        <taxon>Pseudomonadati</taxon>
        <taxon>Pseudomonadota</taxon>
        <taxon>Gammaproteobacteria</taxon>
        <taxon>Enterobacterales</taxon>
        <taxon>Yersiniaceae</taxon>
        <taxon>Yersinia</taxon>
    </lineage>
</organism>
<name>RLMM_YERPB</name>
<sequence>MNNKIALYCRSGFEKECAAEITEKAAQLEIFGFARVKENSGYVLFECYQLEDADRLIREIPFREFIFARQMMVVGELLKDLPPEDRVSPIVGMLVGVIEKAGELRVEVADTNESKELLKFCRKLTVPLRSALREQKILSARENAHRPVVHVFFIAPGCCYVGYSYSNNNSPFYMGIPRLKFPSDAPSRSTLKLEEAFHVFIPADEWEERLASGMHAVDLGACPGGWTYQLVQRSMMIQAVDNGLMAQSLMDTGQVTHHRADGFKYEPTRSNIYWLVCDMVEKPTKVTQLITKWLVNGWCREAIFNLKLPMKKRYEEVVQNLAMMDEQLKENGINADIHAKQLYHDREEVTVHVRRIWSGAPGRRDERY</sequence>
<keyword id="KW-0963">Cytoplasm</keyword>
<keyword id="KW-0489">Methyltransferase</keyword>
<keyword id="KW-0698">rRNA processing</keyword>
<keyword id="KW-0949">S-adenosyl-L-methionine</keyword>
<keyword id="KW-0808">Transferase</keyword>
<proteinExistence type="inferred from homology"/>
<dbReference type="EC" id="2.1.1.186" evidence="1"/>
<dbReference type="EMBL" id="CP001048">
    <property type="protein sequence ID" value="ACC90091.1"/>
    <property type="molecule type" value="Genomic_DNA"/>
</dbReference>
<dbReference type="RefSeq" id="WP_002212119.1">
    <property type="nucleotide sequence ID" value="NZ_CP009780.1"/>
</dbReference>
<dbReference type="SMR" id="B2JZ47"/>
<dbReference type="GeneID" id="57977530"/>
<dbReference type="KEGG" id="ypb:YPTS_3136"/>
<dbReference type="PATRIC" id="fig|502801.10.peg.2568"/>
<dbReference type="GO" id="GO:0005737">
    <property type="term" value="C:cytoplasm"/>
    <property type="evidence" value="ECO:0007669"/>
    <property type="project" value="UniProtKB-SubCell"/>
</dbReference>
<dbReference type="GO" id="GO:0008757">
    <property type="term" value="F:S-adenosylmethionine-dependent methyltransferase activity"/>
    <property type="evidence" value="ECO:0007669"/>
    <property type="project" value="UniProtKB-UniRule"/>
</dbReference>
<dbReference type="GO" id="GO:0032259">
    <property type="term" value="P:methylation"/>
    <property type="evidence" value="ECO:0007669"/>
    <property type="project" value="UniProtKB-KW"/>
</dbReference>
<dbReference type="GO" id="GO:0006364">
    <property type="term" value="P:rRNA processing"/>
    <property type="evidence" value="ECO:0007669"/>
    <property type="project" value="UniProtKB-UniRule"/>
</dbReference>
<dbReference type="Gene3D" id="3.30.2300.20">
    <property type="match status" value="1"/>
</dbReference>
<dbReference type="Gene3D" id="3.30.70.2810">
    <property type="match status" value="1"/>
</dbReference>
<dbReference type="Gene3D" id="3.40.50.150">
    <property type="entry name" value="Vaccinia Virus protein VP39"/>
    <property type="match status" value="1"/>
</dbReference>
<dbReference type="HAMAP" id="MF_01551">
    <property type="entry name" value="23SrRNA_methyltr_M"/>
    <property type="match status" value="1"/>
</dbReference>
<dbReference type="InterPro" id="IPR040739">
    <property type="entry name" value="RlmM_FDX"/>
</dbReference>
<dbReference type="InterPro" id="IPR048646">
    <property type="entry name" value="RlmM_THUMP-like"/>
</dbReference>
<dbReference type="InterPro" id="IPR002877">
    <property type="entry name" value="RNA_MeTrfase_FtsJ_dom"/>
</dbReference>
<dbReference type="InterPro" id="IPR011224">
    <property type="entry name" value="rRNA_MeTrfase_M"/>
</dbReference>
<dbReference type="InterPro" id="IPR029063">
    <property type="entry name" value="SAM-dependent_MTases_sf"/>
</dbReference>
<dbReference type="NCBIfam" id="NF008734">
    <property type="entry name" value="PRK11760.1"/>
    <property type="match status" value="1"/>
</dbReference>
<dbReference type="PANTHER" id="PTHR37524">
    <property type="entry name" value="RIBOSOMAL RNA LARGE SUBUNIT METHYLTRANSFERASE M"/>
    <property type="match status" value="1"/>
</dbReference>
<dbReference type="PANTHER" id="PTHR37524:SF2">
    <property type="entry name" value="RIBOSOMAL RNA METHYLTRANSFERASE FTSJ DOMAIN-CONTAINING PROTEIN"/>
    <property type="match status" value="1"/>
</dbReference>
<dbReference type="Pfam" id="PF01728">
    <property type="entry name" value="FtsJ"/>
    <property type="match status" value="1"/>
</dbReference>
<dbReference type="Pfam" id="PF18125">
    <property type="entry name" value="RlmM_FDX"/>
    <property type="match status" value="1"/>
</dbReference>
<dbReference type="Pfam" id="PF21239">
    <property type="entry name" value="RLMM_N"/>
    <property type="match status" value="1"/>
</dbReference>
<dbReference type="PIRSF" id="PIRSF028774">
    <property type="entry name" value="UCP028774"/>
    <property type="match status" value="1"/>
</dbReference>
<dbReference type="SUPFAM" id="SSF53335">
    <property type="entry name" value="S-adenosyl-L-methionine-dependent methyltransferases"/>
    <property type="match status" value="1"/>
</dbReference>
<feature type="chain" id="PRO_1000201540" description="Ribosomal RNA large subunit methyltransferase M">
    <location>
        <begin position="1"/>
        <end position="368"/>
    </location>
</feature>
<feature type="active site" description="Proton acceptor" evidence="1">
    <location>
        <position position="307"/>
    </location>
</feature>
<feature type="binding site" evidence="1">
    <location>
        <position position="189"/>
    </location>
    <ligand>
        <name>S-adenosyl-L-methionine</name>
        <dbReference type="ChEBI" id="CHEBI:59789"/>
    </ligand>
</feature>
<feature type="binding site" evidence="1">
    <location>
        <begin position="222"/>
        <end position="225"/>
    </location>
    <ligand>
        <name>S-adenosyl-L-methionine</name>
        <dbReference type="ChEBI" id="CHEBI:59789"/>
    </ligand>
</feature>
<feature type="binding site" evidence="1">
    <location>
        <position position="241"/>
    </location>
    <ligand>
        <name>S-adenosyl-L-methionine</name>
        <dbReference type="ChEBI" id="CHEBI:59789"/>
    </ligand>
</feature>
<feature type="binding site" evidence="1">
    <location>
        <position position="261"/>
    </location>
    <ligand>
        <name>S-adenosyl-L-methionine</name>
        <dbReference type="ChEBI" id="CHEBI:59789"/>
    </ligand>
</feature>
<feature type="binding site" evidence="1">
    <location>
        <position position="278"/>
    </location>
    <ligand>
        <name>S-adenosyl-L-methionine</name>
        <dbReference type="ChEBI" id="CHEBI:59789"/>
    </ligand>
</feature>
<evidence type="ECO:0000255" key="1">
    <source>
        <dbReference type="HAMAP-Rule" id="MF_01551"/>
    </source>
</evidence>
<protein>
    <recommendedName>
        <fullName evidence="1">Ribosomal RNA large subunit methyltransferase M</fullName>
        <ecNumber evidence="1">2.1.1.186</ecNumber>
    </recommendedName>
    <alternativeName>
        <fullName evidence="1">23S rRNA (cytidine2498-2'-O)-methyltransferase</fullName>
    </alternativeName>
    <alternativeName>
        <fullName evidence="1">23S rRNA 2'-O-ribose methyltransferase RlmM</fullName>
    </alternativeName>
</protein>
<comment type="function">
    <text evidence="1">Catalyzes the 2'-O-methylation at nucleotide C2498 in 23S rRNA.</text>
</comment>
<comment type="catalytic activity">
    <reaction evidence="1">
        <text>cytidine(2498) in 23S rRNA + S-adenosyl-L-methionine = 2'-O-methylcytidine(2498) in 23S rRNA + S-adenosyl-L-homocysteine + H(+)</text>
        <dbReference type="Rhea" id="RHEA:42788"/>
        <dbReference type="Rhea" id="RHEA-COMP:10244"/>
        <dbReference type="Rhea" id="RHEA-COMP:10245"/>
        <dbReference type="ChEBI" id="CHEBI:15378"/>
        <dbReference type="ChEBI" id="CHEBI:57856"/>
        <dbReference type="ChEBI" id="CHEBI:59789"/>
        <dbReference type="ChEBI" id="CHEBI:74495"/>
        <dbReference type="ChEBI" id="CHEBI:82748"/>
        <dbReference type="EC" id="2.1.1.186"/>
    </reaction>
</comment>
<comment type="subunit">
    <text evidence="1">Monomer.</text>
</comment>
<comment type="subcellular location">
    <subcellularLocation>
        <location evidence="1">Cytoplasm</location>
    </subcellularLocation>
</comment>
<comment type="similarity">
    <text evidence="1">Belongs to the class I-like SAM-binding methyltransferase superfamily. RNA methyltransferase RlmE family. RlmM subfamily.</text>
</comment>